<sequence length="214" mass="23100">MFGRRSMADPPAPPAIILAGGLAQRMGGGDKALRMVGGRTLLALVIDRLASQCDILALSANGDPARFADYDLPVIADPVDGFRGPLAGVLAGLDWVAEHRPAARWMLSTPADCPFLPRDLVARLHQARIDQQADIAVAASAGRSHPVIALWPVGLRIDLRRALLADDIRKVDRFTARYPRAMAEWPVEPADPFFNANTPQDLAEAEGLAMREPD</sequence>
<proteinExistence type="inferred from homology"/>
<evidence type="ECO:0000255" key="1">
    <source>
        <dbReference type="HAMAP-Rule" id="MF_00316"/>
    </source>
</evidence>
<comment type="function">
    <text evidence="1">Transfers a GMP moiety from GTP to Mo-molybdopterin (Mo-MPT) cofactor (Moco or molybdenum cofactor) to form Mo-molybdopterin guanine dinucleotide (Mo-MGD) cofactor.</text>
</comment>
<comment type="catalytic activity">
    <reaction evidence="1">
        <text>Mo-molybdopterin + GTP + H(+) = Mo-molybdopterin guanine dinucleotide + diphosphate</text>
        <dbReference type="Rhea" id="RHEA:34243"/>
        <dbReference type="ChEBI" id="CHEBI:15378"/>
        <dbReference type="ChEBI" id="CHEBI:33019"/>
        <dbReference type="ChEBI" id="CHEBI:37565"/>
        <dbReference type="ChEBI" id="CHEBI:71302"/>
        <dbReference type="ChEBI" id="CHEBI:71310"/>
        <dbReference type="EC" id="2.7.7.77"/>
    </reaction>
</comment>
<comment type="cofactor">
    <cofactor evidence="1">
        <name>Mg(2+)</name>
        <dbReference type="ChEBI" id="CHEBI:18420"/>
    </cofactor>
</comment>
<comment type="subunit">
    <text evidence="1">Monomer.</text>
</comment>
<comment type="subcellular location">
    <subcellularLocation>
        <location evidence="1">Cytoplasm</location>
    </subcellularLocation>
</comment>
<comment type="domain">
    <text evidence="1">The N-terminal domain determines nucleotide recognition and specific binding, while the C-terminal domain determines the specific binding to the target protein.</text>
</comment>
<comment type="similarity">
    <text evidence="1">Belongs to the MobA family.</text>
</comment>
<keyword id="KW-0963">Cytoplasm</keyword>
<keyword id="KW-0342">GTP-binding</keyword>
<keyword id="KW-0460">Magnesium</keyword>
<keyword id="KW-0479">Metal-binding</keyword>
<keyword id="KW-0501">Molybdenum cofactor biosynthesis</keyword>
<keyword id="KW-0547">Nucleotide-binding</keyword>
<keyword id="KW-1185">Reference proteome</keyword>
<keyword id="KW-0808">Transferase</keyword>
<protein>
    <recommendedName>
        <fullName evidence="1">Molybdenum cofactor guanylyltransferase</fullName>
        <shortName evidence="1">MoCo guanylyltransferase</shortName>
        <ecNumber evidence="1">2.7.7.77</ecNumber>
    </recommendedName>
    <alternativeName>
        <fullName evidence="1">GTP:molybdopterin guanylyltransferase</fullName>
    </alternativeName>
    <alternativeName>
        <fullName evidence="1">Mo-MPT guanylyltransferase</fullName>
    </alternativeName>
    <alternativeName>
        <fullName evidence="1">Molybdopterin guanylyltransferase</fullName>
    </alternativeName>
    <alternativeName>
        <fullName evidence="1">Molybdopterin-guanine dinucleotide synthase</fullName>
        <shortName evidence="1">MGD synthase</shortName>
    </alternativeName>
</protein>
<name>MOBA_RHOP2</name>
<accession>Q2IYY0</accession>
<organism>
    <name type="scientific">Rhodopseudomonas palustris (strain HaA2)</name>
    <dbReference type="NCBI Taxonomy" id="316058"/>
    <lineage>
        <taxon>Bacteria</taxon>
        <taxon>Pseudomonadati</taxon>
        <taxon>Pseudomonadota</taxon>
        <taxon>Alphaproteobacteria</taxon>
        <taxon>Hyphomicrobiales</taxon>
        <taxon>Nitrobacteraceae</taxon>
        <taxon>Rhodopseudomonas</taxon>
    </lineage>
</organism>
<dbReference type="EC" id="2.7.7.77" evidence="1"/>
<dbReference type="EMBL" id="CP000250">
    <property type="protein sequence ID" value="ABD06580.1"/>
    <property type="molecule type" value="Genomic_DNA"/>
</dbReference>
<dbReference type="SMR" id="Q2IYY0"/>
<dbReference type="STRING" id="316058.RPB_1872"/>
<dbReference type="KEGG" id="rpb:RPB_1872"/>
<dbReference type="eggNOG" id="COG0746">
    <property type="taxonomic scope" value="Bacteria"/>
</dbReference>
<dbReference type="HOGENOM" id="CLU_055597_5_0_5"/>
<dbReference type="OrthoDB" id="9788394at2"/>
<dbReference type="Proteomes" id="UP000008809">
    <property type="component" value="Chromosome"/>
</dbReference>
<dbReference type="GO" id="GO:0005737">
    <property type="term" value="C:cytoplasm"/>
    <property type="evidence" value="ECO:0007669"/>
    <property type="project" value="UniProtKB-SubCell"/>
</dbReference>
<dbReference type="GO" id="GO:0005525">
    <property type="term" value="F:GTP binding"/>
    <property type="evidence" value="ECO:0007669"/>
    <property type="project" value="UniProtKB-UniRule"/>
</dbReference>
<dbReference type="GO" id="GO:0046872">
    <property type="term" value="F:metal ion binding"/>
    <property type="evidence" value="ECO:0007669"/>
    <property type="project" value="UniProtKB-KW"/>
</dbReference>
<dbReference type="GO" id="GO:0061603">
    <property type="term" value="F:molybdenum cofactor guanylyltransferase activity"/>
    <property type="evidence" value="ECO:0007669"/>
    <property type="project" value="UniProtKB-EC"/>
</dbReference>
<dbReference type="GO" id="GO:1902758">
    <property type="term" value="P:bis(molybdopterin guanine dinucleotide)molybdenum biosynthetic process"/>
    <property type="evidence" value="ECO:0007669"/>
    <property type="project" value="TreeGrafter"/>
</dbReference>
<dbReference type="CDD" id="cd02503">
    <property type="entry name" value="MobA"/>
    <property type="match status" value="1"/>
</dbReference>
<dbReference type="Gene3D" id="3.90.550.10">
    <property type="entry name" value="Spore Coat Polysaccharide Biosynthesis Protein SpsA, Chain A"/>
    <property type="match status" value="1"/>
</dbReference>
<dbReference type="HAMAP" id="MF_00316">
    <property type="entry name" value="MobA"/>
    <property type="match status" value="1"/>
</dbReference>
<dbReference type="InterPro" id="IPR025877">
    <property type="entry name" value="MobA-like_NTP_Trfase"/>
</dbReference>
<dbReference type="InterPro" id="IPR013482">
    <property type="entry name" value="Molybde_CF_guanTrfase"/>
</dbReference>
<dbReference type="InterPro" id="IPR029044">
    <property type="entry name" value="Nucleotide-diphossugar_trans"/>
</dbReference>
<dbReference type="NCBIfam" id="TIGR02665">
    <property type="entry name" value="molyb_mobA"/>
    <property type="match status" value="1"/>
</dbReference>
<dbReference type="PANTHER" id="PTHR19136">
    <property type="entry name" value="MOLYBDENUM COFACTOR GUANYLYLTRANSFERASE"/>
    <property type="match status" value="1"/>
</dbReference>
<dbReference type="PANTHER" id="PTHR19136:SF81">
    <property type="entry name" value="MOLYBDENUM COFACTOR GUANYLYLTRANSFERASE"/>
    <property type="match status" value="1"/>
</dbReference>
<dbReference type="Pfam" id="PF12804">
    <property type="entry name" value="NTP_transf_3"/>
    <property type="match status" value="1"/>
</dbReference>
<dbReference type="SUPFAM" id="SSF53448">
    <property type="entry name" value="Nucleotide-diphospho-sugar transferases"/>
    <property type="match status" value="1"/>
</dbReference>
<gene>
    <name evidence="1" type="primary">mobA</name>
    <name type="ordered locus">RPB_1872</name>
</gene>
<feature type="chain" id="PRO_1000019141" description="Molybdenum cofactor guanylyltransferase">
    <location>
        <begin position="1"/>
        <end position="214"/>
    </location>
</feature>
<feature type="binding site" evidence="1">
    <location>
        <begin position="18"/>
        <end position="20"/>
    </location>
    <ligand>
        <name>GTP</name>
        <dbReference type="ChEBI" id="CHEBI:37565"/>
    </ligand>
</feature>
<feature type="binding site" evidence="1">
    <location>
        <position position="31"/>
    </location>
    <ligand>
        <name>GTP</name>
        <dbReference type="ChEBI" id="CHEBI:37565"/>
    </ligand>
</feature>
<feature type="binding site" evidence="1">
    <location>
        <position position="77"/>
    </location>
    <ligand>
        <name>GTP</name>
        <dbReference type="ChEBI" id="CHEBI:37565"/>
    </ligand>
</feature>
<feature type="binding site" evidence="1">
    <location>
        <position position="112"/>
    </location>
    <ligand>
        <name>GTP</name>
        <dbReference type="ChEBI" id="CHEBI:37565"/>
    </ligand>
</feature>
<feature type="binding site" evidence="1">
    <location>
        <position position="112"/>
    </location>
    <ligand>
        <name>Mg(2+)</name>
        <dbReference type="ChEBI" id="CHEBI:18420"/>
    </ligand>
</feature>
<reference key="1">
    <citation type="submission" date="2006-01" db="EMBL/GenBank/DDBJ databases">
        <title>Complete sequence of Rhodopseudomonas palustris HaA2.</title>
        <authorList>
            <consortium name="US DOE Joint Genome Institute"/>
            <person name="Copeland A."/>
            <person name="Lucas S."/>
            <person name="Lapidus A."/>
            <person name="Barry K."/>
            <person name="Detter J.C."/>
            <person name="Glavina T."/>
            <person name="Hammon N."/>
            <person name="Israni S."/>
            <person name="Pitluck S."/>
            <person name="Chain P."/>
            <person name="Malfatti S."/>
            <person name="Shin M."/>
            <person name="Vergez L."/>
            <person name="Schmutz J."/>
            <person name="Larimer F."/>
            <person name="Land M."/>
            <person name="Hauser L."/>
            <person name="Pelletier D.A."/>
            <person name="Kyrpides N."/>
            <person name="Anderson I."/>
            <person name="Oda Y."/>
            <person name="Harwood C.S."/>
            <person name="Richardson P."/>
        </authorList>
    </citation>
    <scope>NUCLEOTIDE SEQUENCE [LARGE SCALE GENOMIC DNA]</scope>
    <source>
        <strain>HaA2</strain>
    </source>
</reference>